<organism>
    <name type="scientific">Saccharomyces cerevisiae (strain ATCC 204508 / S288c)</name>
    <name type="common">Baker's yeast</name>
    <dbReference type="NCBI Taxonomy" id="559292"/>
    <lineage>
        <taxon>Eukaryota</taxon>
        <taxon>Fungi</taxon>
        <taxon>Dikarya</taxon>
        <taxon>Ascomycota</taxon>
        <taxon>Saccharomycotina</taxon>
        <taxon>Saccharomycetes</taxon>
        <taxon>Saccharomycetales</taxon>
        <taxon>Saccharomycetaceae</taxon>
        <taxon>Saccharomyces</taxon>
    </lineage>
</organism>
<feature type="chain" id="PRO_0000190256" description="Methylenetetrahydrofolate reductase 2">
    <location>
        <begin position="1"/>
        <end position="600"/>
    </location>
</feature>
<feature type="active site" description="Proton donor/acceptor" evidence="1">
    <location>
        <position position="22"/>
    </location>
</feature>
<feature type="binding site" evidence="1">
    <location>
        <begin position="22"/>
        <end position="27"/>
    </location>
    <ligand>
        <name>NAD(+)</name>
        <dbReference type="ChEBI" id="CHEBI:57540"/>
    </ligand>
</feature>
<feature type="binding site" evidence="1">
    <location>
        <begin position="54"/>
        <end position="55"/>
    </location>
    <ligand>
        <name>FAD</name>
        <dbReference type="ChEBI" id="CHEBI:57692"/>
    </ligand>
</feature>
<feature type="binding site" evidence="1">
    <location>
        <begin position="54"/>
        <end position="55"/>
    </location>
    <ligand>
        <name>NAD(+)</name>
        <dbReference type="ChEBI" id="CHEBI:57540"/>
    </ligand>
</feature>
<feature type="binding site" evidence="1">
    <location>
        <position position="84"/>
    </location>
    <ligand>
        <name>FAD</name>
        <dbReference type="ChEBI" id="CHEBI:57692"/>
    </ligand>
</feature>
<feature type="binding site" evidence="1">
    <location>
        <begin position="114"/>
        <end position="116"/>
    </location>
    <ligand>
        <name>FAD</name>
        <dbReference type="ChEBI" id="CHEBI:57692"/>
    </ligand>
</feature>
<feature type="binding site" evidence="1">
    <location>
        <position position="116"/>
    </location>
    <ligand>
        <name>substrate</name>
    </ligand>
</feature>
<feature type="binding site" evidence="1">
    <location>
        <begin position="133"/>
        <end position="134"/>
    </location>
    <ligand>
        <name>FAD</name>
        <dbReference type="ChEBI" id="CHEBI:57692"/>
    </ligand>
</feature>
<feature type="binding site" evidence="1">
    <location>
        <position position="156"/>
    </location>
    <ligand>
        <name>FAD</name>
        <dbReference type="ChEBI" id="CHEBI:57692"/>
    </ligand>
</feature>
<feature type="binding site" evidence="1">
    <location>
        <position position="171"/>
    </location>
    <ligand>
        <name>FAD</name>
        <dbReference type="ChEBI" id="CHEBI:57692"/>
    </ligand>
</feature>
<feature type="binding site" evidence="1">
    <location>
        <position position="178"/>
    </location>
    <ligand>
        <name>FAD</name>
        <dbReference type="ChEBI" id="CHEBI:57692"/>
    </ligand>
</feature>
<feature type="binding site" evidence="1">
    <location>
        <position position="189"/>
    </location>
    <ligand>
        <name>substrate</name>
    </ligand>
</feature>
<feature type="binding site" evidence="1">
    <location>
        <position position="282"/>
    </location>
    <ligand>
        <name>substrate</name>
    </ligand>
</feature>
<feature type="sequence conflict" description="In Ref. 4; AA sequence." evidence="4" ref="4">
    <original>RM</original>
    <variation>LA</variation>
    <location>
        <begin position="41"/>
        <end position="42"/>
    </location>
</feature>
<feature type="sequence conflict" description="In Ref. 4; AA sequence." evidence="4" ref="4">
    <original>P</original>
    <variation>A</variation>
    <location>
        <position position="48"/>
    </location>
</feature>
<feature type="sequence conflict" description="In Ref. 1; CAA63833." evidence="4" ref="1">
    <original>A</original>
    <variation>R</variation>
    <location>
        <position position="73"/>
    </location>
</feature>
<feature type="sequence conflict" description="In Ref. 5; AAC99805." evidence="4" ref="5">
    <original>GVA</original>
    <variation>RC</variation>
    <location>
        <begin position="152"/>
        <end position="154"/>
    </location>
</feature>
<feature type="sequence conflict" description="In Ref. 5; AAC99805." evidence="4" ref="5">
    <location>
        <position position="183"/>
    </location>
</feature>
<feature type="sequence conflict" description="In Ref. 5; AAC99805." evidence="4" ref="5">
    <original>V</original>
    <variation>L</variation>
    <location>
        <position position="211"/>
    </location>
</feature>
<feature type="sequence conflict" description="In Ref. 5; AAC99805." evidence="4" ref="5">
    <original>GQISIPQHFSS</original>
    <variation>ANLHPSTFLV</variation>
    <location>
        <begin position="233"/>
        <end position="243"/>
    </location>
</feature>
<feature type="sequence conflict" description="In Ref. 5; AAC99805." evidence="4" ref="5">
    <original>MCQKLLDSGYV</original>
    <variation>CVKIARQWLR</variation>
    <location>
        <begin position="266"/>
        <end position="276"/>
    </location>
</feature>
<protein>
    <recommendedName>
        <fullName>Methylenetetrahydrofolate reductase 2</fullName>
        <ecNumber evidence="2">1.5.1.53</ecNumber>
    </recommendedName>
    <alternativeName>
        <fullName>YmL45</fullName>
    </alternativeName>
</protein>
<keyword id="KW-0903">Direct protein sequencing</keyword>
<keyword id="KW-0274">FAD</keyword>
<keyword id="KW-0285">Flavoprotein</keyword>
<keyword id="KW-0521">NADP</keyword>
<keyword id="KW-0560">Oxidoreductase</keyword>
<keyword id="KW-1185">Reference proteome</keyword>
<dbReference type="EC" id="1.5.1.53" evidence="2"/>
<dbReference type="EMBL" id="Z72647">
    <property type="protein sequence ID" value="CAA96833.1"/>
    <property type="status" value="ALT_SEQ"/>
    <property type="molecule type" value="Genomic_DNA"/>
</dbReference>
<dbReference type="EMBL" id="X94106">
    <property type="protein sequence ID" value="CAA63833.1"/>
    <property type="status" value="ALT_SEQ"/>
    <property type="molecule type" value="Genomic_DNA"/>
</dbReference>
<dbReference type="EMBL" id="U24271">
    <property type="protein sequence ID" value="AAC99805.1"/>
    <property type="molecule type" value="Genomic_DNA"/>
</dbReference>
<dbReference type="EMBL" id="BK006941">
    <property type="protein sequence ID" value="DAA07984.1"/>
    <property type="molecule type" value="Genomic_DNA"/>
</dbReference>
<dbReference type="PIR" id="S64136">
    <property type="entry name" value="S64136"/>
</dbReference>
<dbReference type="RefSeq" id="NP_011390.2">
    <property type="nucleotide sequence ID" value="NM_001180990.1"/>
</dbReference>
<dbReference type="SMR" id="P53128"/>
<dbReference type="BioGRID" id="33126">
    <property type="interactions" value="107"/>
</dbReference>
<dbReference type="DIP" id="DIP-5188N"/>
<dbReference type="FunCoup" id="P53128">
    <property type="interactions" value="492"/>
</dbReference>
<dbReference type="IntAct" id="P53128">
    <property type="interactions" value="9"/>
</dbReference>
<dbReference type="MINT" id="P53128"/>
<dbReference type="STRING" id="4932.YGL125W"/>
<dbReference type="CarbonylDB" id="P53128"/>
<dbReference type="iPTMnet" id="P53128"/>
<dbReference type="PaxDb" id="4932-YGL125W"/>
<dbReference type="PeptideAtlas" id="P53128"/>
<dbReference type="EnsemblFungi" id="YGL125W_mRNA">
    <property type="protein sequence ID" value="YGL125W"/>
    <property type="gene ID" value="YGL125W"/>
</dbReference>
<dbReference type="GeneID" id="852752"/>
<dbReference type="KEGG" id="sce:YGL125W"/>
<dbReference type="AGR" id="SGD:S000003093"/>
<dbReference type="SGD" id="S000003093">
    <property type="gene designation" value="MET13"/>
</dbReference>
<dbReference type="VEuPathDB" id="FungiDB:YGL125W"/>
<dbReference type="eggNOG" id="KOG0564">
    <property type="taxonomic scope" value="Eukaryota"/>
</dbReference>
<dbReference type="HOGENOM" id="CLU_025841_2_2_1"/>
<dbReference type="InParanoid" id="P53128"/>
<dbReference type="OMA" id="AWKEEFY"/>
<dbReference type="OrthoDB" id="16284at2759"/>
<dbReference type="BioCyc" id="YEAST:YGL125W-MONOMER"/>
<dbReference type="BRENDA" id="1.5.1.20">
    <property type="organism ID" value="984"/>
</dbReference>
<dbReference type="BRENDA" id="1.5.1.53">
    <property type="organism ID" value="984"/>
</dbReference>
<dbReference type="Reactome" id="R-SCE-196757">
    <property type="pathway name" value="Metabolism of folate and pterines"/>
</dbReference>
<dbReference type="SABIO-RK" id="P53128"/>
<dbReference type="UniPathway" id="UPA00193"/>
<dbReference type="BioGRID-ORCS" id="852752">
    <property type="hits" value="3 hits in 10 CRISPR screens"/>
</dbReference>
<dbReference type="PRO" id="PR:P53128"/>
<dbReference type="Proteomes" id="UP000002311">
    <property type="component" value="Chromosome VII"/>
</dbReference>
<dbReference type="RNAct" id="P53128">
    <property type="molecule type" value="protein"/>
</dbReference>
<dbReference type="GO" id="GO:0005739">
    <property type="term" value="C:mitochondrion"/>
    <property type="evidence" value="ECO:0007005"/>
    <property type="project" value="SGD"/>
</dbReference>
<dbReference type="GO" id="GO:0071949">
    <property type="term" value="F:FAD binding"/>
    <property type="evidence" value="ECO:0000318"/>
    <property type="project" value="GO_Central"/>
</dbReference>
<dbReference type="GO" id="GO:0004489">
    <property type="term" value="F:methylenetetrahydrofolate reductase (NAD(P)H) activity"/>
    <property type="evidence" value="ECO:0000314"/>
    <property type="project" value="SGD"/>
</dbReference>
<dbReference type="GO" id="GO:0106313">
    <property type="term" value="F:methylenetetrahydrofolate reductase (NADPH) activity"/>
    <property type="evidence" value="ECO:0007669"/>
    <property type="project" value="RHEA"/>
</dbReference>
<dbReference type="GO" id="GO:0009086">
    <property type="term" value="P:methionine biosynthetic process"/>
    <property type="evidence" value="ECO:0000315"/>
    <property type="project" value="SGD"/>
</dbReference>
<dbReference type="GO" id="GO:0035999">
    <property type="term" value="P:tetrahydrofolate interconversion"/>
    <property type="evidence" value="ECO:0000318"/>
    <property type="project" value="GO_Central"/>
</dbReference>
<dbReference type="CDD" id="cd00537">
    <property type="entry name" value="MTHFR"/>
    <property type="match status" value="1"/>
</dbReference>
<dbReference type="FunFam" id="3.20.20.220:FF:000002">
    <property type="entry name" value="Methylenetetrahydrofolate reductase"/>
    <property type="match status" value="1"/>
</dbReference>
<dbReference type="Gene3D" id="3.20.20.220">
    <property type="match status" value="1"/>
</dbReference>
<dbReference type="InterPro" id="IPR029041">
    <property type="entry name" value="FAD-linked_oxidoreductase-like"/>
</dbReference>
<dbReference type="InterPro" id="IPR004621">
    <property type="entry name" value="Fadh2_euk"/>
</dbReference>
<dbReference type="InterPro" id="IPR003171">
    <property type="entry name" value="Mehydrof_redctse-like"/>
</dbReference>
<dbReference type="InterPro" id="IPR053806">
    <property type="entry name" value="MTHFR_C"/>
</dbReference>
<dbReference type="NCBIfam" id="TIGR00677">
    <property type="entry name" value="fadh2_euk"/>
    <property type="match status" value="1"/>
</dbReference>
<dbReference type="PANTHER" id="PTHR45754">
    <property type="entry name" value="METHYLENETETRAHYDROFOLATE REDUCTASE"/>
    <property type="match status" value="1"/>
</dbReference>
<dbReference type="PANTHER" id="PTHR45754:SF3">
    <property type="entry name" value="METHYLENETETRAHYDROFOLATE REDUCTASE (NADPH)"/>
    <property type="match status" value="1"/>
</dbReference>
<dbReference type="Pfam" id="PF02219">
    <property type="entry name" value="MTHFR"/>
    <property type="match status" value="1"/>
</dbReference>
<dbReference type="Pfam" id="PF21895">
    <property type="entry name" value="MTHFR_C"/>
    <property type="match status" value="1"/>
</dbReference>
<dbReference type="SUPFAM" id="SSF51730">
    <property type="entry name" value="FAD-linked oxidoreductase"/>
    <property type="match status" value="1"/>
</dbReference>
<gene>
    <name type="primary">MET13</name>
    <name type="synonym">MET11</name>
    <name type="synonym">MRPL45</name>
    <name type="ordered locus">YGL125W</name>
    <name type="ORF">G2882</name>
</gene>
<reference key="1">
    <citation type="journal article" date="1996" name="Yeast">
        <title>Identification of a putative methylenetetrahydrofolate reductase by sequence analysis of a 6.8 kb DNA fragment of yeast chromosome VII.</title>
        <authorList>
            <person name="Tizon B."/>
            <person name="Rodriguez-Torres A.M."/>
            <person name="Rodriguez-Belmonte E."/>
            <person name="Cadahia J.L."/>
            <person name="Cerdan E."/>
        </authorList>
    </citation>
    <scope>NUCLEOTIDE SEQUENCE [GENOMIC DNA]</scope>
</reference>
<reference key="2">
    <citation type="journal article" date="1997" name="Nature">
        <title>The nucleotide sequence of Saccharomyces cerevisiae chromosome VII.</title>
        <authorList>
            <person name="Tettelin H."/>
            <person name="Agostoni-Carbone M.L."/>
            <person name="Albermann K."/>
            <person name="Albers M."/>
            <person name="Arroyo J."/>
            <person name="Backes U."/>
            <person name="Barreiros T."/>
            <person name="Bertani I."/>
            <person name="Bjourson A.J."/>
            <person name="Brueckner M."/>
            <person name="Bruschi C.V."/>
            <person name="Carignani G."/>
            <person name="Castagnoli L."/>
            <person name="Cerdan E."/>
            <person name="Clemente M.L."/>
            <person name="Coblenz A."/>
            <person name="Coglievina M."/>
            <person name="Coissac E."/>
            <person name="Defoor E."/>
            <person name="Del Bino S."/>
            <person name="Delius H."/>
            <person name="Delneri D."/>
            <person name="de Wergifosse P."/>
            <person name="Dujon B."/>
            <person name="Durand P."/>
            <person name="Entian K.-D."/>
            <person name="Eraso P."/>
            <person name="Escribano V."/>
            <person name="Fabiani L."/>
            <person name="Fartmann B."/>
            <person name="Feroli F."/>
            <person name="Feuermann M."/>
            <person name="Frontali L."/>
            <person name="Garcia-Gonzalez M."/>
            <person name="Garcia-Saez M.I."/>
            <person name="Goffeau A."/>
            <person name="Guerreiro P."/>
            <person name="Hani J."/>
            <person name="Hansen M."/>
            <person name="Hebling U."/>
            <person name="Hernandez K."/>
            <person name="Heumann K."/>
            <person name="Hilger F."/>
            <person name="Hofmann B."/>
            <person name="Indge K.J."/>
            <person name="James C.M."/>
            <person name="Klima R."/>
            <person name="Koetter P."/>
            <person name="Kramer B."/>
            <person name="Kramer W."/>
            <person name="Lauquin G."/>
            <person name="Leuther H."/>
            <person name="Louis E.J."/>
            <person name="Maillier E."/>
            <person name="Marconi A."/>
            <person name="Martegani E."/>
            <person name="Mazon M.J."/>
            <person name="Mazzoni C."/>
            <person name="McReynolds A.D.K."/>
            <person name="Melchioretto P."/>
            <person name="Mewes H.-W."/>
            <person name="Minenkova O."/>
            <person name="Mueller-Auer S."/>
            <person name="Nawrocki A."/>
            <person name="Netter P."/>
            <person name="Neu R."/>
            <person name="Nombela C."/>
            <person name="Oliver S.G."/>
            <person name="Panzeri L."/>
            <person name="Paoluzi S."/>
            <person name="Plevani P."/>
            <person name="Portetelle D."/>
            <person name="Portillo F."/>
            <person name="Potier S."/>
            <person name="Purnelle B."/>
            <person name="Rieger M."/>
            <person name="Riles L."/>
            <person name="Rinaldi T."/>
            <person name="Robben J."/>
            <person name="Rodrigues-Pousada C."/>
            <person name="Rodriguez-Belmonte E."/>
            <person name="Rodriguez-Torres A.M."/>
            <person name="Rose M."/>
            <person name="Ruzzi M."/>
            <person name="Saliola M."/>
            <person name="Sanchez-Perez M."/>
            <person name="Schaefer B."/>
            <person name="Schaefer M."/>
            <person name="Scharfe M."/>
            <person name="Schmidheini T."/>
            <person name="Schreer A."/>
            <person name="Skala J."/>
            <person name="Souciet J.-L."/>
            <person name="Steensma H.Y."/>
            <person name="Talla E."/>
            <person name="Thierry A."/>
            <person name="Vandenbol M."/>
            <person name="van der Aart Q.J.M."/>
            <person name="Van Dyck L."/>
            <person name="Vanoni M."/>
            <person name="Verhasselt P."/>
            <person name="Voet M."/>
            <person name="Volckaert G."/>
            <person name="Wambutt R."/>
            <person name="Watson M.D."/>
            <person name="Weber N."/>
            <person name="Wedler E."/>
            <person name="Wedler H."/>
            <person name="Wipfli P."/>
            <person name="Wolf K."/>
            <person name="Wright L.F."/>
            <person name="Zaccaria P."/>
            <person name="Zimmermann M."/>
            <person name="Zollner A."/>
            <person name="Kleine K."/>
        </authorList>
    </citation>
    <scope>NUCLEOTIDE SEQUENCE [LARGE SCALE GENOMIC DNA]</scope>
    <source>
        <strain>ATCC 204508 / S288c</strain>
    </source>
</reference>
<reference key="3">
    <citation type="journal article" date="2014" name="G3 (Bethesda)">
        <title>The reference genome sequence of Saccharomyces cerevisiae: Then and now.</title>
        <authorList>
            <person name="Engel S.R."/>
            <person name="Dietrich F.S."/>
            <person name="Fisk D.G."/>
            <person name="Binkley G."/>
            <person name="Balakrishnan R."/>
            <person name="Costanzo M.C."/>
            <person name="Dwight S.S."/>
            <person name="Hitz B.C."/>
            <person name="Karra K."/>
            <person name="Nash R.S."/>
            <person name="Weng S."/>
            <person name="Wong E.D."/>
            <person name="Lloyd P."/>
            <person name="Skrzypek M.S."/>
            <person name="Miyasato S.R."/>
            <person name="Simison M."/>
            <person name="Cherry J.M."/>
        </authorList>
    </citation>
    <scope>GENOME REANNOTATION</scope>
    <source>
        <strain>ATCC 204508 / S288c</strain>
    </source>
</reference>
<reference key="4">
    <citation type="journal article" date="1997" name="Eur. J. Biochem.">
        <title>Identification and characterization of the genes for mitochondrial ribosomal proteins of Saccharomyces cerevisiae.</title>
        <authorList>
            <person name="Kitakawa M."/>
            <person name="Graack H.-R."/>
            <person name="Grohmann L."/>
            <person name="Goldschmidt-Reisin S."/>
            <person name="Herfurth E."/>
            <person name="Wittmann-Liebold B."/>
            <person name="Nishimura T."/>
            <person name="Isono K."/>
        </authorList>
    </citation>
    <scope>PROTEIN SEQUENCE OF 39-49</scope>
</reference>
<reference key="5">
    <citation type="submission" date="1995-04" db="EMBL/GenBank/DDBJ databases">
        <authorList>
            <person name="Housen I."/>
            <person name="Lafontaine D."/>
            <person name="Belot N."/>
            <person name="Vandenhaute J."/>
        </authorList>
    </citation>
    <scope>NUCLEOTIDE SEQUENCE [GENOMIC DNA] OF 120-286</scope>
    <source>
        <strain>ATCC 28383 / FL100 / VTT C-80102</strain>
    </source>
</reference>
<reference key="6">
    <citation type="journal article" date="1999" name="Arch. Biochem. Biophys.">
        <title>Saccharomyces cerevisiae expresses two genes encoding isozymes of methylenetetrahydrofolate reductase.</title>
        <authorList>
            <person name="Raymond R.K."/>
            <person name="Kastanos E.K."/>
            <person name="Appling D.R."/>
        </authorList>
    </citation>
    <scope>FUNCTION</scope>
</reference>
<reference key="7">
    <citation type="journal article" date="2002" name="J. Biol. Chem.">
        <title>Metabolic engineering in yeast demonstrates that S-adenosylmethionine controls flux through the methylenetetrahydrofolate reductase reaction in vivo.</title>
        <authorList>
            <person name="Roje S."/>
            <person name="Chan S.Y."/>
            <person name="Kaplan F."/>
            <person name="Raymond R.K."/>
            <person name="Horne D.W."/>
            <person name="Appling D.R."/>
            <person name="Hanson A.D."/>
        </authorList>
    </citation>
    <scope>FUNCTION</scope>
    <scope>CATALYTIC ACTIVITY</scope>
</reference>
<reference key="8">
    <citation type="journal article" date="2002" name="J. Biol. Chem.">
        <authorList>
            <person name="Roje S."/>
            <person name="Chan S.Y."/>
            <person name="Kaplan F."/>
            <person name="Raymond R.K."/>
            <person name="Horne D.W."/>
            <person name="Appling D.R."/>
            <person name="Hanson A.D."/>
        </authorList>
    </citation>
    <scope>ERRATUM OF PUBMED:11729203</scope>
    <scope>SEQUENCE REVISION TO 176-181; 197-198 AND 230</scope>
</reference>
<reference key="9">
    <citation type="journal article" date="2003" name="Nature">
        <title>Global analysis of protein expression in yeast.</title>
        <authorList>
            <person name="Ghaemmaghami S."/>
            <person name="Huh W.-K."/>
            <person name="Bower K."/>
            <person name="Howson R.W."/>
            <person name="Belle A."/>
            <person name="Dephoure N."/>
            <person name="O'Shea E.K."/>
            <person name="Weissman J.S."/>
        </authorList>
    </citation>
    <scope>LEVEL OF PROTEIN EXPRESSION [LARGE SCALE ANALYSIS]</scope>
</reference>
<reference key="10">
    <citation type="journal article" date="2012" name="Proc. Natl. Acad. Sci. U.S.A.">
        <title>N-terminal acetylome analyses and functional insights of the N-terminal acetyltransferase NatB.</title>
        <authorList>
            <person name="Van Damme P."/>
            <person name="Lasa M."/>
            <person name="Polevoda B."/>
            <person name="Gazquez C."/>
            <person name="Elosegui-Artola A."/>
            <person name="Kim D.S."/>
            <person name="De Juan-Pardo E."/>
            <person name="Demeyer K."/>
            <person name="Hole K."/>
            <person name="Larrea E."/>
            <person name="Timmerman E."/>
            <person name="Prieto J."/>
            <person name="Arnesen T."/>
            <person name="Sherman F."/>
            <person name="Gevaert K."/>
            <person name="Aldabe R."/>
        </authorList>
    </citation>
    <scope>IDENTIFICATION BY MASS SPECTROMETRY [LARGE SCALE ANALYSIS]</scope>
</reference>
<name>MTHR2_YEAST</name>
<comment type="catalytic activity">
    <reaction evidence="2">
        <text>(6S)-5-methyl-5,6,7,8-tetrahydrofolate + NADP(+) = (6R)-5,10-methylene-5,6,7,8-tetrahydrofolate + NADPH + H(+)</text>
        <dbReference type="Rhea" id="RHEA:19817"/>
        <dbReference type="ChEBI" id="CHEBI:15378"/>
        <dbReference type="ChEBI" id="CHEBI:15636"/>
        <dbReference type="ChEBI" id="CHEBI:18608"/>
        <dbReference type="ChEBI" id="CHEBI:57783"/>
        <dbReference type="ChEBI" id="CHEBI:58349"/>
        <dbReference type="EC" id="1.5.1.53"/>
    </reaction>
</comment>
<comment type="cofactor">
    <cofactor evidence="1">
        <name>FAD</name>
        <dbReference type="ChEBI" id="CHEBI:57692"/>
    </cofactor>
</comment>
<comment type="pathway">
    <text>One-carbon metabolism; tetrahydrofolate interconversion.</text>
</comment>
<comment type="interaction">
    <interactant intactId="EBI-11572">
        <id>P53128</id>
    </interactant>
    <interactant intactId="EBI-11567">
        <id>P46151</id>
        <label>MET12</label>
    </interactant>
    <organismsDiffer>false</organismsDiffer>
    <experiments>2</experiments>
</comment>
<comment type="miscellaneous">
    <text evidence="3">Present with 8600 molecules/cell in log phase SD medium.</text>
</comment>
<comment type="similarity">
    <text evidence="4">Belongs to the methylenetetrahydrofolate reductase family.</text>
</comment>
<comment type="caution">
    <text evidence="5">Was originally thought to be a mitochondrial ribosomal protein.</text>
</comment>
<comment type="sequence caution" evidence="4">
    <conflict type="miscellaneous discrepancy">
        <sequence resource="EMBL-CDS" id="CAA63833"/>
    </conflict>
    <text>Sequencing errors.</text>
</comment>
<comment type="sequence caution" evidence="4">
    <conflict type="miscellaneous discrepancy">
        <sequence resource="EMBL-CDS" id="CAA96833"/>
    </conflict>
    <text>Sequencing errors.</text>
</comment>
<evidence type="ECO:0000250" key="1"/>
<evidence type="ECO:0000269" key="2">
    <source>
    </source>
</evidence>
<evidence type="ECO:0000269" key="3">
    <source>
    </source>
</evidence>
<evidence type="ECO:0000305" key="4"/>
<evidence type="ECO:0000305" key="5">
    <source>
    </source>
</evidence>
<proteinExistence type="evidence at protein level"/>
<accession>P53128</accession>
<accession>D6VU23</accession>
<accession>O94090</accession>
<accession>Q92318</accession>
<sequence length="600" mass="68560">MKITEKLEQHRQTSGKPTYSFEYFVPKTTQGVQNLYDRMDRMYEASLPQFIDITWNAGGGRLSHLSTDLVATAQSVLGLETCMHLTCTNMPISMIDDALENAYHSGCQNILALRGDPPRDAENWTPVEGGFQYAKDLIKYIKSKYGDHFAIGVAGYPECHPELPNKDVKLDLEYLKQKIDAGGDFIITQMFYDVDNFINWCSQVRAAGMDVPIIPGIMPITTYAAFLRRAQWGQISIPQHFSSRLDPIKDDDELVRDIGTNLIVEMCQKLLDSGYVSHLHIYTMNLEKAPLMILERLNILPTESEFNAHPLAVLPWRKSLNPKRKNEEVRPIFWKRRPYSYVARTSQWAVDEFPNGRFGDSSSPAFGDLDLCGSDLIRQSANKCLELWSTPTSINDVAFLVINYLNGNLKCLPWSDIPINDEINPIKAHLIELNQHSIITINSQPQVNGIRSNDKIHGWGPKDGYVYQKQYLEFMLPKTKLPKLIDTLKNNEFLTYFAIDSQGDLLSNHPDNSKSNAVTWGIFPGREILQPTIVEKISFLAWKEEFYHILNEWKLNMNKYDKPHSAQFIQSLIDDYCLVNIVDNDYISPDDQIHSILLSL</sequence>